<accession>Q6GA04</accession>
<proteinExistence type="inferred from homology"/>
<comment type="function">
    <text evidence="1">Essential for recycling GMP and indirectly, cGMP.</text>
</comment>
<comment type="catalytic activity">
    <reaction evidence="1">
        <text>GMP + ATP = GDP + ADP</text>
        <dbReference type="Rhea" id="RHEA:20780"/>
        <dbReference type="ChEBI" id="CHEBI:30616"/>
        <dbReference type="ChEBI" id="CHEBI:58115"/>
        <dbReference type="ChEBI" id="CHEBI:58189"/>
        <dbReference type="ChEBI" id="CHEBI:456216"/>
        <dbReference type="EC" id="2.7.4.8"/>
    </reaction>
</comment>
<comment type="subcellular location">
    <subcellularLocation>
        <location evidence="1">Cytoplasm</location>
    </subcellularLocation>
</comment>
<comment type="similarity">
    <text evidence="1">Belongs to the guanylate kinase family.</text>
</comment>
<dbReference type="EC" id="2.7.4.8" evidence="1"/>
<dbReference type="EMBL" id="BX571857">
    <property type="protein sequence ID" value="CAG42920.1"/>
    <property type="molecule type" value="Genomic_DNA"/>
</dbReference>
<dbReference type="RefSeq" id="WP_000368227.1">
    <property type="nucleotide sequence ID" value="NC_002953.3"/>
</dbReference>
<dbReference type="SMR" id="Q6GA04"/>
<dbReference type="KEGG" id="sas:SAS1143"/>
<dbReference type="HOGENOM" id="CLU_001715_1_2_9"/>
<dbReference type="GO" id="GO:0005829">
    <property type="term" value="C:cytosol"/>
    <property type="evidence" value="ECO:0007669"/>
    <property type="project" value="TreeGrafter"/>
</dbReference>
<dbReference type="GO" id="GO:0005524">
    <property type="term" value="F:ATP binding"/>
    <property type="evidence" value="ECO:0007669"/>
    <property type="project" value="UniProtKB-UniRule"/>
</dbReference>
<dbReference type="GO" id="GO:0004385">
    <property type="term" value="F:guanylate kinase activity"/>
    <property type="evidence" value="ECO:0007669"/>
    <property type="project" value="UniProtKB-UniRule"/>
</dbReference>
<dbReference type="CDD" id="cd00071">
    <property type="entry name" value="GMPK"/>
    <property type="match status" value="1"/>
</dbReference>
<dbReference type="FunFam" id="3.40.50.300:FF:000855">
    <property type="entry name" value="Guanylate kinase"/>
    <property type="match status" value="1"/>
</dbReference>
<dbReference type="FunFam" id="3.30.63.10:FF:000002">
    <property type="entry name" value="Guanylate kinase 1"/>
    <property type="match status" value="1"/>
</dbReference>
<dbReference type="Gene3D" id="3.30.63.10">
    <property type="entry name" value="Guanylate Kinase phosphate binding domain"/>
    <property type="match status" value="1"/>
</dbReference>
<dbReference type="Gene3D" id="3.40.50.300">
    <property type="entry name" value="P-loop containing nucleotide triphosphate hydrolases"/>
    <property type="match status" value="1"/>
</dbReference>
<dbReference type="HAMAP" id="MF_00328">
    <property type="entry name" value="Guanylate_kinase"/>
    <property type="match status" value="1"/>
</dbReference>
<dbReference type="InterPro" id="IPR008145">
    <property type="entry name" value="GK/Ca_channel_bsu"/>
</dbReference>
<dbReference type="InterPro" id="IPR008144">
    <property type="entry name" value="Guanylate_kin-like_dom"/>
</dbReference>
<dbReference type="InterPro" id="IPR017665">
    <property type="entry name" value="Guanylate_kinase"/>
</dbReference>
<dbReference type="InterPro" id="IPR020590">
    <property type="entry name" value="Guanylate_kinase_CS"/>
</dbReference>
<dbReference type="InterPro" id="IPR027417">
    <property type="entry name" value="P-loop_NTPase"/>
</dbReference>
<dbReference type="NCBIfam" id="TIGR03263">
    <property type="entry name" value="guanyl_kin"/>
    <property type="match status" value="1"/>
</dbReference>
<dbReference type="PANTHER" id="PTHR23117:SF13">
    <property type="entry name" value="GUANYLATE KINASE"/>
    <property type="match status" value="1"/>
</dbReference>
<dbReference type="PANTHER" id="PTHR23117">
    <property type="entry name" value="GUANYLATE KINASE-RELATED"/>
    <property type="match status" value="1"/>
</dbReference>
<dbReference type="Pfam" id="PF00625">
    <property type="entry name" value="Guanylate_kin"/>
    <property type="match status" value="1"/>
</dbReference>
<dbReference type="SMART" id="SM00072">
    <property type="entry name" value="GuKc"/>
    <property type="match status" value="1"/>
</dbReference>
<dbReference type="SUPFAM" id="SSF52540">
    <property type="entry name" value="P-loop containing nucleoside triphosphate hydrolases"/>
    <property type="match status" value="1"/>
</dbReference>
<dbReference type="PROSITE" id="PS00856">
    <property type="entry name" value="GUANYLATE_KINASE_1"/>
    <property type="match status" value="1"/>
</dbReference>
<dbReference type="PROSITE" id="PS50052">
    <property type="entry name" value="GUANYLATE_KINASE_2"/>
    <property type="match status" value="1"/>
</dbReference>
<reference key="1">
    <citation type="journal article" date="2004" name="Proc. Natl. Acad. Sci. U.S.A.">
        <title>Complete genomes of two clinical Staphylococcus aureus strains: evidence for the rapid evolution of virulence and drug resistance.</title>
        <authorList>
            <person name="Holden M.T.G."/>
            <person name="Feil E.J."/>
            <person name="Lindsay J.A."/>
            <person name="Peacock S.J."/>
            <person name="Day N.P.J."/>
            <person name="Enright M.C."/>
            <person name="Foster T.J."/>
            <person name="Moore C.E."/>
            <person name="Hurst L."/>
            <person name="Atkin R."/>
            <person name="Barron A."/>
            <person name="Bason N."/>
            <person name="Bentley S.D."/>
            <person name="Chillingworth C."/>
            <person name="Chillingworth T."/>
            <person name="Churcher C."/>
            <person name="Clark L."/>
            <person name="Corton C."/>
            <person name="Cronin A."/>
            <person name="Doggett J."/>
            <person name="Dowd L."/>
            <person name="Feltwell T."/>
            <person name="Hance Z."/>
            <person name="Harris B."/>
            <person name="Hauser H."/>
            <person name="Holroyd S."/>
            <person name="Jagels K."/>
            <person name="James K.D."/>
            <person name="Lennard N."/>
            <person name="Line A."/>
            <person name="Mayes R."/>
            <person name="Moule S."/>
            <person name="Mungall K."/>
            <person name="Ormond D."/>
            <person name="Quail M.A."/>
            <person name="Rabbinowitsch E."/>
            <person name="Rutherford K.M."/>
            <person name="Sanders M."/>
            <person name="Sharp S."/>
            <person name="Simmonds M."/>
            <person name="Stevens K."/>
            <person name="Whitehead S."/>
            <person name="Barrell B.G."/>
            <person name="Spratt B.G."/>
            <person name="Parkhill J."/>
        </authorList>
    </citation>
    <scope>NUCLEOTIDE SEQUENCE [LARGE SCALE GENOMIC DNA]</scope>
    <source>
        <strain>MSSA476</strain>
    </source>
</reference>
<sequence length="207" mass="24037">MDNEKGLLIVLSGPSGVGKGTVRKRIFEDPSTSYKYSISMTTRQMREGEVDGVDYFFKTRDAFEALIKDDQFIEYAEYVGNYYGTPVQYVKDTMDEGHDVFLEIEVEGAKQVRKKFPDALFIFLAPPSLEHLRERLVGRGTESDEKIQSRINEARKEVEMMNLYDYVVVNDEVELAKNRIQCIVEAEHLKRERVEAKYRKMILEAKK</sequence>
<keyword id="KW-0067">ATP-binding</keyword>
<keyword id="KW-0963">Cytoplasm</keyword>
<keyword id="KW-0418">Kinase</keyword>
<keyword id="KW-0547">Nucleotide-binding</keyword>
<keyword id="KW-0808">Transferase</keyword>
<protein>
    <recommendedName>
        <fullName evidence="1">Guanylate kinase</fullName>
        <ecNumber evidence="1">2.7.4.8</ecNumber>
    </recommendedName>
    <alternativeName>
        <fullName evidence="1">GMP kinase</fullName>
    </alternativeName>
</protein>
<name>KGUA_STAAS</name>
<evidence type="ECO:0000255" key="1">
    <source>
        <dbReference type="HAMAP-Rule" id="MF_00328"/>
    </source>
</evidence>
<feature type="chain" id="PRO_0000170607" description="Guanylate kinase">
    <location>
        <begin position="1"/>
        <end position="207"/>
    </location>
</feature>
<feature type="domain" description="Guanylate kinase-like" evidence="1">
    <location>
        <begin position="6"/>
        <end position="185"/>
    </location>
</feature>
<feature type="binding site" evidence="1">
    <location>
        <begin position="13"/>
        <end position="20"/>
    </location>
    <ligand>
        <name>ATP</name>
        <dbReference type="ChEBI" id="CHEBI:30616"/>
    </ligand>
</feature>
<organism>
    <name type="scientific">Staphylococcus aureus (strain MSSA476)</name>
    <dbReference type="NCBI Taxonomy" id="282459"/>
    <lineage>
        <taxon>Bacteria</taxon>
        <taxon>Bacillati</taxon>
        <taxon>Bacillota</taxon>
        <taxon>Bacilli</taxon>
        <taxon>Bacillales</taxon>
        <taxon>Staphylococcaceae</taxon>
        <taxon>Staphylococcus</taxon>
    </lineage>
</organism>
<gene>
    <name evidence="1" type="primary">gmk</name>
    <name type="ordered locus">SAS1143</name>
</gene>